<protein>
    <recommendedName>
        <fullName evidence="1">Ribosome-binding factor A</fullName>
    </recommendedName>
</protein>
<dbReference type="EMBL" id="CP000038">
    <property type="protein sequence ID" value="AAZ89888.1"/>
    <property type="molecule type" value="Genomic_DNA"/>
</dbReference>
<dbReference type="RefSeq" id="WP_001040205.1">
    <property type="nucleotide sequence ID" value="NC_007384.1"/>
</dbReference>
<dbReference type="SMR" id="Q3YX74"/>
<dbReference type="GeneID" id="93778816"/>
<dbReference type="KEGG" id="ssn:SSON_3313"/>
<dbReference type="HOGENOM" id="CLU_089475_5_0_6"/>
<dbReference type="Proteomes" id="UP000002529">
    <property type="component" value="Chromosome"/>
</dbReference>
<dbReference type="GO" id="GO:0005829">
    <property type="term" value="C:cytosol"/>
    <property type="evidence" value="ECO:0007669"/>
    <property type="project" value="TreeGrafter"/>
</dbReference>
<dbReference type="GO" id="GO:0043024">
    <property type="term" value="F:ribosomal small subunit binding"/>
    <property type="evidence" value="ECO:0007669"/>
    <property type="project" value="TreeGrafter"/>
</dbReference>
<dbReference type="GO" id="GO:0030490">
    <property type="term" value="P:maturation of SSU-rRNA"/>
    <property type="evidence" value="ECO:0007669"/>
    <property type="project" value="UniProtKB-UniRule"/>
</dbReference>
<dbReference type="FunFam" id="3.30.300.20:FF:000007">
    <property type="entry name" value="Ribosome-binding factor A"/>
    <property type="match status" value="1"/>
</dbReference>
<dbReference type="Gene3D" id="3.30.300.20">
    <property type="match status" value="1"/>
</dbReference>
<dbReference type="HAMAP" id="MF_00003">
    <property type="entry name" value="RbfA"/>
    <property type="match status" value="1"/>
</dbReference>
<dbReference type="InterPro" id="IPR015946">
    <property type="entry name" value="KH_dom-like_a/b"/>
</dbReference>
<dbReference type="InterPro" id="IPR000238">
    <property type="entry name" value="RbfA"/>
</dbReference>
<dbReference type="InterPro" id="IPR023799">
    <property type="entry name" value="RbfA_dom_sf"/>
</dbReference>
<dbReference type="InterPro" id="IPR020053">
    <property type="entry name" value="Ribosome-bd_factorA_CS"/>
</dbReference>
<dbReference type="NCBIfam" id="TIGR00082">
    <property type="entry name" value="rbfA"/>
    <property type="match status" value="1"/>
</dbReference>
<dbReference type="PANTHER" id="PTHR33515">
    <property type="entry name" value="RIBOSOME-BINDING FACTOR A, CHLOROPLASTIC-RELATED"/>
    <property type="match status" value="1"/>
</dbReference>
<dbReference type="PANTHER" id="PTHR33515:SF1">
    <property type="entry name" value="RIBOSOME-BINDING FACTOR A, CHLOROPLASTIC-RELATED"/>
    <property type="match status" value="1"/>
</dbReference>
<dbReference type="Pfam" id="PF02033">
    <property type="entry name" value="RBFA"/>
    <property type="match status" value="1"/>
</dbReference>
<dbReference type="SUPFAM" id="SSF89919">
    <property type="entry name" value="Ribosome-binding factor A, RbfA"/>
    <property type="match status" value="1"/>
</dbReference>
<dbReference type="PROSITE" id="PS01319">
    <property type="entry name" value="RBFA"/>
    <property type="match status" value="1"/>
</dbReference>
<sequence length="133" mass="15154">MAKEFGRPQRVAQEMQKEIALILQREIKDPRLGMMTTVSGVEMSRDLAYAKVYVTFLNDKDEDAVKAGIKALQEASGFIRSLLGKAMRLRIVPELTFFYDNSLVEGMRMSNLVTSVVKHDEERRVNPDDSKED</sequence>
<proteinExistence type="inferred from homology"/>
<accession>Q3YX74</accession>
<name>RBFA_SHISS</name>
<reference key="1">
    <citation type="journal article" date="2005" name="Nucleic Acids Res.">
        <title>Genome dynamics and diversity of Shigella species, the etiologic agents of bacillary dysentery.</title>
        <authorList>
            <person name="Yang F."/>
            <person name="Yang J."/>
            <person name="Zhang X."/>
            <person name="Chen L."/>
            <person name="Jiang Y."/>
            <person name="Yan Y."/>
            <person name="Tang X."/>
            <person name="Wang J."/>
            <person name="Xiong Z."/>
            <person name="Dong J."/>
            <person name="Xue Y."/>
            <person name="Zhu Y."/>
            <person name="Xu X."/>
            <person name="Sun L."/>
            <person name="Chen S."/>
            <person name="Nie H."/>
            <person name="Peng J."/>
            <person name="Xu J."/>
            <person name="Wang Y."/>
            <person name="Yuan Z."/>
            <person name="Wen Y."/>
            <person name="Yao Z."/>
            <person name="Shen Y."/>
            <person name="Qiang B."/>
            <person name="Hou Y."/>
            <person name="Yu J."/>
            <person name="Jin Q."/>
        </authorList>
    </citation>
    <scope>NUCLEOTIDE SEQUENCE [LARGE SCALE GENOMIC DNA]</scope>
    <source>
        <strain>Ss046</strain>
    </source>
</reference>
<keyword id="KW-0963">Cytoplasm</keyword>
<keyword id="KW-1185">Reference proteome</keyword>
<keyword id="KW-0690">Ribosome biogenesis</keyword>
<feature type="chain" id="PRO_1000000212" description="Ribosome-binding factor A">
    <location>
        <begin position="1"/>
        <end position="133"/>
    </location>
</feature>
<gene>
    <name evidence="1" type="primary">rbfA</name>
    <name type="ordered locus">SSON_3313</name>
</gene>
<evidence type="ECO:0000255" key="1">
    <source>
        <dbReference type="HAMAP-Rule" id="MF_00003"/>
    </source>
</evidence>
<comment type="function">
    <text evidence="1">One of several proteins that assist in the late maturation steps of the functional core of the 30S ribosomal subunit. Associates with free 30S ribosomal subunits (but not with 30S subunits that are part of 70S ribosomes or polysomes). Required for efficient processing of 16S rRNA. May interact with the 5'-terminal helix region of 16S rRNA.</text>
</comment>
<comment type="subunit">
    <text evidence="1">Monomer. Binds 30S ribosomal subunits, but not 50S ribosomal subunits or 70S ribosomes.</text>
</comment>
<comment type="subcellular location">
    <subcellularLocation>
        <location evidence="1">Cytoplasm</location>
    </subcellularLocation>
</comment>
<comment type="similarity">
    <text evidence="1">Belongs to the RbfA family.</text>
</comment>
<organism>
    <name type="scientific">Shigella sonnei (strain Ss046)</name>
    <dbReference type="NCBI Taxonomy" id="300269"/>
    <lineage>
        <taxon>Bacteria</taxon>
        <taxon>Pseudomonadati</taxon>
        <taxon>Pseudomonadota</taxon>
        <taxon>Gammaproteobacteria</taxon>
        <taxon>Enterobacterales</taxon>
        <taxon>Enterobacteriaceae</taxon>
        <taxon>Shigella</taxon>
    </lineage>
</organism>